<evidence type="ECO:0000250" key="1">
    <source>
        <dbReference type="UniProtKB" id="Q9UK96"/>
    </source>
</evidence>
<evidence type="ECO:0000255" key="2">
    <source>
        <dbReference type="PROSITE-ProRule" id="PRU00080"/>
    </source>
</evidence>
<evidence type="ECO:0000256" key="3">
    <source>
        <dbReference type="SAM" id="MobiDB-lite"/>
    </source>
</evidence>
<evidence type="ECO:0000269" key="4">
    <source>
    </source>
</evidence>
<evidence type="ECO:0000305" key="5"/>
<evidence type="ECO:0007744" key="6">
    <source>
    </source>
</evidence>
<gene>
    <name type="primary">Fbxo10</name>
    <name type="synonym">Gm634</name>
</gene>
<sequence length="950" mass="104478">METGGLPLELWRMILAYLHLPDLGRCSLVCRAWYELILSLDSTRWRQLCLGCTECRHPNWPNQPDVEPESWREAFKQHYLASKTWTKNALDLESSICFSLFRRKKERRTLSVGPGHEFDSLGSALAMASLYDRIVLFPGVYEEQGEIILKVPVEIVGQGKLGEVALLASIDQHCSTTRVCNLVFMPAWFSPIMYKTTSGHIQFDNCNFENGHIQVHGPGTCQVKFCTFKNTHVFLHNVPLCMLENCEFVGSENNCVTVEGHPSADKNWAYKYLLGLIKSSPIFLPAEDHDFLMSLDLESRDQAWSPRTCDIVIEGSQSPTSPVCSSPKPGSKEAEVGSDGERVAQTPDSSDGGLSPSGEDEDDEQLTYRLSYQVQGPRPVLGGSFLGPPLPGASIQLPSCLVLNSLHQELQKDKEAMALASSVQGCLIRKCLFRDGKGGVFVCSYGRAKMEGNVFRNLTYAVRCIHNSKIVMLRNDIYRCRASGIFLRLEGGGLIAGNNIYHNAEAGVDIRKKSNPLILCNQIHHGLRSGIVVLGNGKGVIRNNQIFSNKEAGIYILYHGNPIVSGNHIFKGRAAGIAVNENGKGLITENVIRENQWGGVDIRRGGVPILRSNLICFGYSDGVVVGDEGKGLIEGNTIYANKGCGVWMMSSSLPHVTSNHVSYNGLYGVAVFSQKDGEFPGGHGAQENFSEDGDAILWEAELEKEDDPLRRPITVALVESNSINHNGASGIFVQSSEALQVVANVIHANGDRGITIVQSSQLTRVANNSISCNRQSGVKVEFQCKVELRGNGIYDNRGHGIITKGDGTAVVENDIIGNRGSGLQLLPRSDTKVLKNRIHSFRAYGIAVRGRVKALVQENIIFQGKTNKTIFQQITNNRECIMQNNKFLVFKKKSDTWRLVNPPARPHLENSLRGSSAAHSGHKVTAMATRITARVEGGYHSNRSIFCTIL</sequence>
<dbReference type="EMBL" id="AL824706">
    <property type="status" value="NOT_ANNOTATED_CDS"/>
    <property type="molecule type" value="Genomic_DNA"/>
</dbReference>
<dbReference type="EMBL" id="BC052485">
    <property type="protein sequence ID" value="AAH52485.1"/>
    <property type="molecule type" value="mRNA"/>
</dbReference>
<dbReference type="EMBL" id="BC054731">
    <property type="protein sequence ID" value="AAH54731.1"/>
    <property type="status" value="ALT_INIT"/>
    <property type="molecule type" value="mRNA"/>
</dbReference>
<dbReference type="EMBL" id="BC079571">
    <property type="protein sequence ID" value="AAH79571.1"/>
    <property type="molecule type" value="mRNA"/>
</dbReference>
<dbReference type="CCDS" id="CCDS51171.1"/>
<dbReference type="RefSeq" id="NP_001019313.1">
    <property type="nucleotide sequence ID" value="NM_001024142.2"/>
</dbReference>
<dbReference type="SMR" id="Q7TQF2"/>
<dbReference type="FunCoup" id="Q7TQF2">
    <property type="interactions" value="611"/>
</dbReference>
<dbReference type="STRING" id="10090.ENSMUSP00000058233"/>
<dbReference type="GlyGen" id="Q7TQF2">
    <property type="glycosylation" value="1 site, 1 O-linked glycan (1 site)"/>
</dbReference>
<dbReference type="iPTMnet" id="Q7TQF2"/>
<dbReference type="PhosphoSitePlus" id="Q7TQF2"/>
<dbReference type="SwissPalm" id="Q7TQF2"/>
<dbReference type="PaxDb" id="10090-ENSMUSP00000058233"/>
<dbReference type="PeptideAtlas" id="Q7TQF2"/>
<dbReference type="ProteomicsDB" id="272959"/>
<dbReference type="Pumba" id="Q7TQF2"/>
<dbReference type="Antibodypedia" id="26292">
    <property type="antibodies" value="57 antibodies from 17 providers"/>
</dbReference>
<dbReference type="Ensembl" id="ENSMUST00000052236.13">
    <property type="protein sequence ID" value="ENSMUSP00000058233.7"/>
    <property type="gene ID" value="ENSMUSG00000048232.13"/>
</dbReference>
<dbReference type="GeneID" id="269529"/>
<dbReference type="KEGG" id="mmu:269529"/>
<dbReference type="UCSC" id="uc008ssf.2">
    <property type="organism name" value="mouse"/>
</dbReference>
<dbReference type="AGR" id="MGI:2686937"/>
<dbReference type="CTD" id="26267"/>
<dbReference type="MGI" id="MGI:2686937">
    <property type="gene designation" value="Fbxo10"/>
</dbReference>
<dbReference type="VEuPathDB" id="HostDB:ENSMUSG00000048232"/>
<dbReference type="eggNOG" id="KOG1777">
    <property type="taxonomic scope" value="Eukaryota"/>
</dbReference>
<dbReference type="GeneTree" id="ENSGT00530000063425"/>
<dbReference type="HOGENOM" id="CLU_013632_0_0_1"/>
<dbReference type="InParanoid" id="Q7TQF2"/>
<dbReference type="OMA" id="CNLIFMP"/>
<dbReference type="OrthoDB" id="427974at2759"/>
<dbReference type="PhylomeDB" id="Q7TQF2"/>
<dbReference type="TreeFam" id="TF313602"/>
<dbReference type="Reactome" id="R-MMU-8951664">
    <property type="pathway name" value="Neddylation"/>
</dbReference>
<dbReference type="Reactome" id="R-MMU-983168">
    <property type="pathway name" value="Antigen processing: Ubiquitination &amp; Proteasome degradation"/>
</dbReference>
<dbReference type="UniPathway" id="UPA00143"/>
<dbReference type="BioGRID-ORCS" id="269529">
    <property type="hits" value="1 hit in 77 CRISPR screens"/>
</dbReference>
<dbReference type="ChiTaRS" id="Fbxo10">
    <property type="organism name" value="mouse"/>
</dbReference>
<dbReference type="PRO" id="PR:Q7TQF2"/>
<dbReference type="Proteomes" id="UP000000589">
    <property type="component" value="Chromosome 4"/>
</dbReference>
<dbReference type="RNAct" id="Q7TQF2">
    <property type="molecule type" value="protein"/>
</dbReference>
<dbReference type="Bgee" id="ENSMUSG00000048232">
    <property type="expression patterns" value="Expressed in ventromedial nucleus of hypothalamus and 187 other cell types or tissues"/>
</dbReference>
<dbReference type="ExpressionAtlas" id="Q7TQF2">
    <property type="expression patterns" value="baseline and differential"/>
</dbReference>
<dbReference type="GO" id="GO:0005737">
    <property type="term" value="C:cytoplasm"/>
    <property type="evidence" value="ECO:0007669"/>
    <property type="project" value="UniProtKB-SubCell"/>
</dbReference>
<dbReference type="GO" id="GO:0006915">
    <property type="term" value="P:apoptotic process"/>
    <property type="evidence" value="ECO:0007669"/>
    <property type="project" value="UniProtKB-KW"/>
</dbReference>
<dbReference type="GO" id="GO:0016567">
    <property type="term" value="P:protein ubiquitination"/>
    <property type="evidence" value="ECO:0007669"/>
    <property type="project" value="UniProtKB-UniPathway"/>
</dbReference>
<dbReference type="GO" id="GO:0042981">
    <property type="term" value="P:regulation of apoptotic process"/>
    <property type="evidence" value="ECO:0007669"/>
    <property type="project" value="Ensembl"/>
</dbReference>
<dbReference type="GO" id="GO:0006511">
    <property type="term" value="P:ubiquitin-dependent protein catabolic process"/>
    <property type="evidence" value="ECO:0007669"/>
    <property type="project" value="Ensembl"/>
</dbReference>
<dbReference type="CDD" id="cd22090">
    <property type="entry name" value="F-box_FBXO10"/>
    <property type="match status" value="1"/>
</dbReference>
<dbReference type="FunFam" id="1.20.1280.50:FF:000009">
    <property type="entry name" value="F-box only protein 10"/>
    <property type="match status" value="1"/>
</dbReference>
<dbReference type="FunFam" id="2.160.20.10:FF:000015">
    <property type="entry name" value="F-box only protein 10"/>
    <property type="match status" value="1"/>
</dbReference>
<dbReference type="FunFam" id="2.160.20.10:FF:000017">
    <property type="entry name" value="F-box only protein 10"/>
    <property type="match status" value="1"/>
</dbReference>
<dbReference type="FunFam" id="2.160.20.10:FF:000022">
    <property type="entry name" value="F-box only protein 10"/>
    <property type="match status" value="1"/>
</dbReference>
<dbReference type="Gene3D" id="1.20.1280.50">
    <property type="match status" value="1"/>
</dbReference>
<dbReference type="Gene3D" id="2.160.20.10">
    <property type="entry name" value="Single-stranded right-handed beta-helix, Pectin lyase-like"/>
    <property type="match status" value="3"/>
</dbReference>
<dbReference type="InterPro" id="IPR039448">
    <property type="entry name" value="Beta_helix"/>
</dbReference>
<dbReference type="InterPro" id="IPR006633">
    <property type="entry name" value="Carb-bd_sugar_hydrolysis-dom"/>
</dbReference>
<dbReference type="InterPro" id="IPR036047">
    <property type="entry name" value="F-box-like_dom_sf"/>
</dbReference>
<dbReference type="InterPro" id="IPR001810">
    <property type="entry name" value="F-box_dom"/>
</dbReference>
<dbReference type="InterPro" id="IPR007742">
    <property type="entry name" value="NosD_dom"/>
</dbReference>
<dbReference type="InterPro" id="IPR022441">
    <property type="entry name" value="Para_beta_helix_rpt-2"/>
</dbReference>
<dbReference type="InterPro" id="IPR006626">
    <property type="entry name" value="PbH1"/>
</dbReference>
<dbReference type="InterPro" id="IPR012334">
    <property type="entry name" value="Pectin_lyas_fold"/>
</dbReference>
<dbReference type="InterPro" id="IPR011050">
    <property type="entry name" value="Pectin_lyase_fold/virulence"/>
</dbReference>
<dbReference type="InterPro" id="IPR051550">
    <property type="entry name" value="SCF-Subunits/Alg-Epimerases"/>
</dbReference>
<dbReference type="NCBIfam" id="TIGR03804">
    <property type="entry name" value="para_beta_helix"/>
    <property type="match status" value="1"/>
</dbReference>
<dbReference type="PANTHER" id="PTHR22990">
    <property type="entry name" value="F-BOX ONLY PROTEIN"/>
    <property type="match status" value="1"/>
</dbReference>
<dbReference type="PANTHER" id="PTHR22990:SF15">
    <property type="entry name" value="F-BOX ONLY PROTEIN 10"/>
    <property type="match status" value="1"/>
</dbReference>
<dbReference type="Pfam" id="PF13229">
    <property type="entry name" value="Beta_helix"/>
    <property type="match status" value="1"/>
</dbReference>
<dbReference type="Pfam" id="PF12937">
    <property type="entry name" value="F-box-like"/>
    <property type="match status" value="1"/>
</dbReference>
<dbReference type="Pfam" id="PF05048">
    <property type="entry name" value="NosD"/>
    <property type="match status" value="1"/>
</dbReference>
<dbReference type="SMART" id="SM00722">
    <property type="entry name" value="CASH"/>
    <property type="match status" value="3"/>
</dbReference>
<dbReference type="SMART" id="SM00256">
    <property type="entry name" value="FBOX"/>
    <property type="match status" value="1"/>
</dbReference>
<dbReference type="SMART" id="SM00710">
    <property type="entry name" value="PbH1"/>
    <property type="match status" value="17"/>
</dbReference>
<dbReference type="SUPFAM" id="SSF81383">
    <property type="entry name" value="F-box domain"/>
    <property type="match status" value="1"/>
</dbReference>
<dbReference type="SUPFAM" id="SSF51126">
    <property type="entry name" value="Pectin lyase-like"/>
    <property type="match status" value="4"/>
</dbReference>
<dbReference type="PROSITE" id="PS50181">
    <property type="entry name" value="FBOX"/>
    <property type="match status" value="1"/>
</dbReference>
<name>FBX10_MOUSE</name>
<reference key="1">
    <citation type="journal article" date="2009" name="PLoS Biol.">
        <title>Lineage-specific biology revealed by a finished genome assembly of the mouse.</title>
        <authorList>
            <person name="Church D.M."/>
            <person name="Goodstadt L."/>
            <person name="Hillier L.W."/>
            <person name="Zody M.C."/>
            <person name="Goldstein S."/>
            <person name="She X."/>
            <person name="Bult C.J."/>
            <person name="Agarwala R."/>
            <person name="Cherry J.L."/>
            <person name="DiCuccio M."/>
            <person name="Hlavina W."/>
            <person name="Kapustin Y."/>
            <person name="Meric P."/>
            <person name="Maglott D."/>
            <person name="Birtle Z."/>
            <person name="Marques A.C."/>
            <person name="Graves T."/>
            <person name="Zhou S."/>
            <person name="Teague B."/>
            <person name="Potamousis K."/>
            <person name="Churas C."/>
            <person name="Place M."/>
            <person name="Herschleb J."/>
            <person name="Runnheim R."/>
            <person name="Forrest D."/>
            <person name="Amos-Landgraf J."/>
            <person name="Schwartz D.C."/>
            <person name="Cheng Z."/>
            <person name="Lindblad-Toh K."/>
            <person name="Eichler E.E."/>
            <person name="Ponting C.P."/>
        </authorList>
    </citation>
    <scope>NUCLEOTIDE SEQUENCE [LARGE SCALE GENOMIC DNA]</scope>
    <source>
        <strain>C57BL/6J</strain>
    </source>
</reference>
<reference key="2">
    <citation type="journal article" date="2004" name="Genome Res.">
        <title>The status, quality, and expansion of the NIH full-length cDNA project: the Mammalian Gene Collection (MGC).</title>
        <authorList>
            <consortium name="The MGC Project Team"/>
        </authorList>
    </citation>
    <scope>NUCLEOTIDE SEQUENCE [LARGE SCALE MRNA]</scope>
    <source>
        <strain>C57BL/6J</strain>
        <tissue>Brain</tissue>
        <tissue>Olfactory epithelium</tissue>
    </source>
</reference>
<reference key="3">
    <citation type="submission" date="2009-01" db="UniProtKB">
        <authorList>
            <person name="Lubec G."/>
            <person name="Sunyer B."/>
            <person name="Chen W.-Q."/>
        </authorList>
    </citation>
    <scope>PROTEIN SEQUENCE OF 829-835</scope>
    <scope>IDENTIFICATION BY MASS SPECTROMETRY</scope>
    <source>
        <strain>OF1</strain>
        <tissue>Hippocampus</tissue>
    </source>
</reference>
<reference key="4">
    <citation type="journal article" date="2010" name="Cell">
        <title>A tissue-specific atlas of mouse protein phosphorylation and expression.</title>
        <authorList>
            <person name="Huttlin E.L."/>
            <person name="Jedrychowski M.P."/>
            <person name="Elias J.E."/>
            <person name="Goswami T."/>
            <person name="Rad R."/>
            <person name="Beausoleil S.A."/>
            <person name="Villen J."/>
            <person name="Haas W."/>
            <person name="Sowa M.E."/>
            <person name="Gygi S.P."/>
        </authorList>
    </citation>
    <scope>PHOSPHORYLATION [LARGE SCALE ANALYSIS] AT SER-321 AND SER-326</scope>
    <scope>IDENTIFICATION BY MASS SPECTROMETRY [LARGE SCALE ANALYSIS]</scope>
    <source>
        <tissue>Brain</tissue>
    </source>
</reference>
<reference key="5">
    <citation type="journal article" date="2021" name="PLoS ONE">
        <title>Loss-of-function of Fbxo10, encoding a post-translational regulator of BCL2 in lymphomas, has no discernible effect on BCL2 or B lymphocyte accumulation in mice.</title>
        <authorList>
            <person name="Masle-Farquhar E."/>
            <person name="Russell A."/>
            <person name="Li Y."/>
            <person name="Zhu F."/>
            <person name="Rui L."/>
            <person name="Brink R."/>
            <person name="Goodnow C.C."/>
        </authorList>
    </citation>
    <scope>DISRUPTION PHENOTYPE</scope>
    <scope>TISSUE SPECIFICITY</scope>
</reference>
<accession>Q7TQF2</accession>
<accession>A2ANI6</accession>
<accession>Q6AXG0</accession>
<accession>Q7TQM0</accession>
<feature type="chain" id="PRO_0000307718" description="F-box only protein 10">
    <location>
        <begin position="1"/>
        <end position="950"/>
    </location>
</feature>
<feature type="domain" description="F-box" evidence="2">
    <location>
        <begin position="1"/>
        <end position="48"/>
    </location>
</feature>
<feature type="repeat" description="PbH1 1">
    <location>
        <begin position="198"/>
        <end position="217"/>
    </location>
</feature>
<feature type="repeat" description="PbH1 2">
    <location>
        <begin position="238"/>
        <end position="260"/>
    </location>
</feature>
<feature type="repeat" description="PbH1 3">
    <location>
        <begin position="423"/>
        <end position="444"/>
    </location>
</feature>
<feature type="repeat" description="PbH1 4">
    <location>
        <begin position="467"/>
        <end position="489"/>
    </location>
</feature>
<feature type="repeat" description="PbH1 5">
    <location>
        <begin position="490"/>
        <end position="512"/>
    </location>
</feature>
<feature type="repeat" description="PbH1 6">
    <location>
        <begin position="513"/>
        <end position="535"/>
    </location>
</feature>
<feature type="repeat" description="PbH1 7">
    <location>
        <begin position="536"/>
        <end position="558"/>
    </location>
</feature>
<feature type="repeat" description="PbH1 8">
    <location>
        <begin position="559"/>
        <end position="581"/>
    </location>
</feature>
<feature type="repeat" description="PbH1 9">
    <location>
        <begin position="582"/>
        <end position="604"/>
    </location>
</feature>
<feature type="repeat" description="PbH1 10">
    <location>
        <begin position="605"/>
        <end position="627"/>
    </location>
</feature>
<feature type="repeat" description="PbH1 11">
    <location>
        <begin position="628"/>
        <end position="650"/>
    </location>
</feature>
<feature type="repeat" description="PbH1 12">
    <location>
        <begin position="651"/>
        <end position="673"/>
    </location>
</feature>
<feature type="repeat" description="PbH1 13">
    <location>
        <begin position="713"/>
        <end position="735"/>
    </location>
</feature>
<feature type="repeat" description="PbH1 14">
    <location>
        <begin position="736"/>
        <end position="758"/>
    </location>
</feature>
<feature type="repeat" description="PbH1 15">
    <location>
        <begin position="760"/>
        <end position="782"/>
    </location>
</feature>
<feature type="repeat" description="PbH1 16">
    <location>
        <begin position="783"/>
        <end position="805"/>
    </location>
</feature>
<feature type="repeat" description="PbH1 17">
    <location>
        <begin position="828"/>
        <end position="850"/>
    </location>
</feature>
<feature type="region of interest" description="Disordered" evidence="3">
    <location>
        <begin position="313"/>
        <end position="364"/>
    </location>
</feature>
<feature type="compositionally biased region" description="Polar residues" evidence="3">
    <location>
        <begin position="315"/>
        <end position="324"/>
    </location>
</feature>
<feature type="compositionally biased region" description="Basic and acidic residues" evidence="3">
    <location>
        <begin position="330"/>
        <end position="342"/>
    </location>
</feature>
<feature type="compositionally biased region" description="Low complexity" evidence="3">
    <location>
        <begin position="347"/>
        <end position="357"/>
    </location>
</feature>
<feature type="modified residue" description="Phosphoserine" evidence="6">
    <location>
        <position position="321"/>
    </location>
</feature>
<feature type="modified residue" description="Phosphoserine" evidence="6">
    <location>
        <position position="326"/>
    </location>
</feature>
<feature type="sequence conflict" description="In Ref. 2; AAH54731." evidence="5" ref="2">
    <original>I</original>
    <variation>T</variation>
    <location>
        <position position="192"/>
    </location>
</feature>
<organism>
    <name type="scientific">Mus musculus</name>
    <name type="common">Mouse</name>
    <dbReference type="NCBI Taxonomy" id="10090"/>
    <lineage>
        <taxon>Eukaryota</taxon>
        <taxon>Metazoa</taxon>
        <taxon>Chordata</taxon>
        <taxon>Craniata</taxon>
        <taxon>Vertebrata</taxon>
        <taxon>Euteleostomi</taxon>
        <taxon>Mammalia</taxon>
        <taxon>Eutheria</taxon>
        <taxon>Euarchontoglires</taxon>
        <taxon>Glires</taxon>
        <taxon>Rodentia</taxon>
        <taxon>Myomorpha</taxon>
        <taxon>Muroidea</taxon>
        <taxon>Muridae</taxon>
        <taxon>Murinae</taxon>
        <taxon>Mus</taxon>
        <taxon>Mus</taxon>
    </lineage>
</organism>
<keyword id="KW-0053">Apoptosis</keyword>
<keyword id="KW-0963">Cytoplasm</keyword>
<keyword id="KW-0903">Direct protein sequencing</keyword>
<keyword id="KW-0597">Phosphoprotein</keyword>
<keyword id="KW-1185">Reference proteome</keyword>
<keyword id="KW-0677">Repeat</keyword>
<keyword id="KW-0833">Ubl conjugation pathway</keyword>
<comment type="function">
    <text evidence="1">Substrate-recognition component of the SCF (SKP1-CUL1-F-box protein)-type E3 ubiquitin ligase complex. Mediates the ubiquitination and degradation of BCL2, an antiapoptotic protein, thereby playing a role in apoptosis by controlling the stability of BCL2. Targets also the receptor for advanced glycation end products RAGE for ubiquitination and subsequent lysosomal degradation. Directly controls HGAL/GCSAM ubiquitination and degradation and thereby decreases BCR signaling.</text>
</comment>
<comment type="pathway">
    <text>Protein modification; protein ubiquitination.</text>
</comment>
<comment type="subunit">
    <text evidence="1">Component of the SCF(FBXO10) complex consisting of CUL1, SKP1 and FBXO10. Interacts with BCL2. Interacts with PRDM1.</text>
</comment>
<comment type="subcellular location">
    <subcellularLocation>
        <location evidence="1">Cytoplasm</location>
    </subcellularLocation>
</comment>
<comment type="tissue specificity">
    <text evidence="4">Particularly highly expressed in B-cells.</text>
</comment>
<comment type="disruption phenotype">
    <text evidence="4">FBXO10 deletion has no detectable effect on B-cells in bone marrow or spleen. Similarly, it has no detectable effect on T-cell thymic development or T-cell splenic maturation.</text>
</comment>
<comment type="sequence caution" evidence="5">
    <conflict type="erroneous initiation">
        <sequence resource="EMBL-CDS" id="AAH54731"/>
    </conflict>
    <text>Extended N-terminus.</text>
</comment>
<proteinExistence type="evidence at protein level"/>
<protein>
    <recommendedName>
        <fullName>F-box only protein 10</fullName>
    </recommendedName>
</protein>